<reference key="1">
    <citation type="journal article" date="1997" name="Neuron">
        <title>aex-3 encodes a novel regulator of presynaptic activity in C. elegans.</title>
        <authorList>
            <person name="Iwasaki K."/>
            <person name="Staunton J."/>
            <person name="Saifee O."/>
            <person name="Nonet M."/>
            <person name="Thomas J.H."/>
        </authorList>
    </citation>
    <scope>NUCLEOTIDE SEQUENCE [MRNA] (ISOFORM A)</scope>
    <scope>FUNCTION</scope>
    <scope>TISSUE SPECIFICITY</scope>
    <scope>DISRUPTION PHENOTYPE</scope>
    <source>
        <strain>Bristol N2</strain>
    </source>
</reference>
<reference key="2">
    <citation type="journal article" date="1998" name="Science">
        <title>Genome sequence of the nematode C. elegans: a platform for investigating biology.</title>
        <authorList>
            <consortium name="The C. elegans sequencing consortium"/>
        </authorList>
    </citation>
    <scope>NUCLEOTIDE SEQUENCE [LARGE SCALE GENOMIC DNA]</scope>
    <scope>ALTERNATIVE SPLICING</scope>
    <source>
        <strain>Bristol N2</strain>
    </source>
</reference>
<reference key="3">
    <citation type="journal article" date="2000" name="EMBO J.">
        <title>The rab3 GDP/GTP exchange factor homolog AEX-3 has a dual function in synaptic transmission.</title>
        <authorList>
            <person name="Iwasaki K."/>
            <person name="Toyonaga R."/>
        </authorList>
    </citation>
    <scope>FUNCTION</scope>
    <scope>INTERACTION WITH CAB-1</scope>
</reference>
<reference key="4">
    <citation type="journal article" date="2008" name="Proc. Natl. Acad. Sci. U.S.A.">
        <title>Intestinal signaling to GABAergic neurons regulates a rhythmic behavior in Caenorhabditis elegans.</title>
        <authorList>
            <person name="Mahoney T.R."/>
            <person name="Luo S."/>
            <person name="Round E.K."/>
            <person name="Brauner M."/>
            <person name="Gottschalk A."/>
            <person name="Thomas J.H."/>
            <person name="Nonet M.L."/>
        </authorList>
    </citation>
    <scope>FUNCTION</scope>
    <scope>DISRUPTION PHENOTYPE</scope>
</reference>
<reference key="5">
    <citation type="journal article" date="2010" name="Cell">
        <title>Endophilin functions as a membrane-bending molecule and is delivered to endocytic zones by exocytosis.</title>
        <authorList>
            <person name="Bai J."/>
            <person name="Hu Z."/>
            <person name="Dittman J.S."/>
            <person name="Pym E.C."/>
            <person name="Kaplan J.M."/>
        </authorList>
    </citation>
    <scope>FUNCTION</scope>
</reference>
<reference key="6">
    <citation type="journal article" date="2015" name="PLoS ONE">
        <title>Aberrant fat metabolism in Caenorhabditis elegans mutants with defects in the defecation motor program.</title>
        <authorList>
            <person name="Sheng M."/>
            <person name="Hosseinzadeh A."/>
            <person name="Muralidharan S.V."/>
            <person name="Gaur R."/>
            <person name="Selstam E."/>
            <person name="Tuck S."/>
        </authorList>
    </citation>
    <scope>FUNCTION</scope>
</reference>
<reference key="7">
    <citation type="journal article" date="2016" name="Genetics">
        <title>Pioneer Axon Navigation Is Controlled by AEX-3, a Guanine Nucleotide Exchange Factor for RAB-3 in Caenorhabditis elegans.</title>
        <authorList>
            <person name="Bhat J.M."/>
            <person name="Hutter H."/>
        </authorList>
    </citation>
    <scope>FUNCTION</scope>
</reference>
<sequence>MNDKEKEICPRLIDFLVVVGKRNRTRGASQSSPDATTDTTVTYPEILRRYPTDDHKDFILPTDVTVFCQPEGCTTTSARLRKNARNDPQFFVFMLTEKDSAKVRYGICLNFYQSFDRRSTPKDEIKKVPDDAHHKKRDSHVSLTSLCFISHHPFVSIFHQVLLLLKRIIDSSNHRAAQRTGLKDVVWAILTGHYNEPIVPEVMKEIKEIETWILMLLSSPVPVPGKTKVQIEVMPMDLSQVFEFALPDHTRFTLIDFPLHIPFEILGIDMALRVLTAAMLEFKIVIQSRNYNAVSMCILSIVALLYPLEYMFPVIPLLPAYMPSAEQLLLAPTPFLIGVPSSFFHHRKIRELPSDVILVDLDTNCLQVPDDLYIPDLPEPDATHLKERLKNAINKMTTMTVDNETSVTDADFGIDIDSVDVACRVAMVQFFNSANVFGNFSEHTRTLRLYPRPVVSLQTDSFLRSRPQCTQLITDLCRTQAVEYFAECCLCPKNETFVRVQAGIESAEQVGDKPKWFSESLMPVHFMVYPNNSTLDSAIRVYNAEIDNDDYEDDSATSTENSNSIDDLVFDENQVTDAGGEVTKPLAEVNYIYKEPMTLELPQSESVVSIDSSLSSGRSSPDSSLSTSAVDSEADFARLADNLALKSNSQGAFSFDHGSDSEYESTPVSQRRKTIHNPGSDASDTPTSRGSIKSGLRMKGLTTLTDSGEKVLGPSLMNAINGYAEKSQSVFSQVINKTAPKAQALKERTMKPLANRIEQSQHIVRSKTQPNPTSQQTANQQSKNQQTVKEFCDQALVGQSVGMFSAPKLKRLMEDESLRELVCSKLNLGLEVKLSEDEYVKEVQLTKGQFKAYVKILKACLEGIEVSFNTPGCCGFASVFHVLEIAHTHYWAMGGGEVITPSSSAPSTMTTPSEHSNDILKESRPKLPASTIDLRTPTKPLGQNVTPTSTNNHEIAQSTRSPALPPPVPPREAPPIPKRNPPPLGAPPKVPEGARAPPPLPPRPKVKTTAVDETPQNLVPNNQPAQPSSPSFLADADEQTKPLLKPAPPTTLPVGKQEPCKVLPTPNEPVRHYIYQELILAVQHQIWQNLQFWENAFVDLVAQEREIVGMDQEPSEMIDRYSALNDSEKKRLELEEDRLLSTLLHNMTAYMIMCGTGQKALQQKVRRLLGKAHIGLVCSKEINKLLDELPSTQGNFIPLKPLGSRLVQKQSFTVCPGQSSDGQMMFMEVCDDAVVLRSITGAATERWWYERLVNITYSPKTKILCLWRRHDDKVHMHKFHTKKCRELYQCMKAAMERAAARGKVNVEGRALGGEFPVHDTETNQGGLLQVRCDGVAVIFAHNQIFIGLSNIKKCNTFGGNVFLLEEFDRKKGEIIQRRYFSQMADQICYAVLCVFSLAAAGHKKEEHSK</sequence>
<dbReference type="EMBL" id="U93842">
    <property type="protein sequence ID" value="AAB52421.1"/>
    <property type="molecule type" value="mRNA"/>
</dbReference>
<dbReference type="EMBL" id="FO080298">
    <property type="protein sequence ID" value="CCD62710.1"/>
    <property type="molecule type" value="Genomic_DNA"/>
</dbReference>
<dbReference type="EMBL" id="FO080298">
    <property type="protein sequence ID" value="CCD62711.1"/>
    <property type="molecule type" value="Genomic_DNA"/>
</dbReference>
<dbReference type="PIR" id="T37188">
    <property type="entry name" value="T37188"/>
</dbReference>
<dbReference type="RefSeq" id="NP_001024342.1">
    <molecule id="O02626-2"/>
    <property type="nucleotide sequence ID" value="NM_001029171.7"/>
</dbReference>
<dbReference type="RefSeq" id="NP_741710.1">
    <molecule id="O02626-1"/>
    <property type="nucleotide sequence ID" value="NM_171618.6"/>
</dbReference>
<dbReference type="BioGRID" id="45373">
    <property type="interactions" value="1"/>
</dbReference>
<dbReference type="FunCoup" id="O02626">
    <property type="interactions" value="808"/>
</dbReference>
<dbReference type="STRING" id="6239.C02H7.3a.1"/>
<dbReference type="PaxDb" id="6239-C02H7.3a"/>
<dbReference type="PeptideAtlas" id="O02626"/>
<dbReference type="EnsemblMetazoa" id="C02H7.3a.1">
    <molecule id="O02626-1"/>
    <property type="protein sequence ID" value="C02H7.3a.1"/>
    <property type="gene ID" value="WBGene00000086"/>
</dbReference>
<dbReference type="EnsemblMetazoa" id="C02H7.3b.1">
    <molecule id="O02626-2"/>
    <property type="protein sequence ID" value="C02H7.3b.1"/>
    <property type="gene ID" value="WBGene00000086"/>
</dbReference>
<dbReference type="GeneID" id="180420"/>
<dbReference type="KEGG" id="cel:CELE_C02H7.3"/>
<dbReference type="UCSC" id="C02H7.3a">
    <molecule id="O02626-1"/>
    <property type="organism name" value="c. elegans"/>
</dbReference>
<dbReference type="AGR" id="WB:WBGene00000086"/>
<dbReference type="CTD" id="180420"/>
<dbReference type="WormBase" id="C02H7.3a">
    <molecule id="O02626-1"/>
    <property type="protein sequence ID" value="CE16806"/>
    <property type="gene ID" value="WBGene00000086"/>
    <property type="gene designation" value="aex-3"/>
</dbReference>
<dbReference type="WormBase" id="C02H7.3b">
    <molecule id="O02626-2"/>
    <property type="protein sequence ID" value="CE30850"/>
    <property type="gene ID" value="WBGene00000086"/>
    <property type="gene designation" value="aex-3"/>
</dbReference>
<dbReference type="eggNOG" id="KOG3570">
    <property type="taxonomic scope" value="Eukaryota"/>
</dbReference>
<dbReference type="GeneTree" id="ENSGT00940000156718"/>
<dbReference type="HOGENOM" id="CLU_001270_0_0_1"/>
<dbReference type="InParanoid" id="O02626"/>
<dbReference type="OMA" id="TKILCLW"/>
<dbReference type="OrthoDB" id="6282239at2759"/>
<dbReference type="PhylomeDB" id="O02626"/>
<dbReference type="Reactome" id="R-CEL-8876198">
    <property type="pathway name" value="RAB GEFs exchange GTP for GDP on RABs"/>
</dbReference>
<dbReference type="PRO" id="PR:O02626"/>
<dbReference type="Proteomes" id="UP000001940">
    <property type="component" value="Chromosome X"/>
</dbReference>
<dbReference type="Bgee" id="WBGene00000086">
    <property type="expression patterns" value="Expressed in pharyngeal muscle cell (C elegans) and 3 other cell types or tissues"/>
</dbReference>
<dbReference type="GO" id="GO:0005829">
    <property type="term" value="C:cytosol"/>
    <property type="evidence" value="ECO:0000318"/>
    <property type="project" value="GO_Central"/>
</dbReference>
<dbReference type="GO" id="GO:0005886">
    <property type="term" value="C:plasma membrane"/>
    <property type="evidence" value="ECO:0007669"/>
    <property type="project" value="UniProtKB-SubCell"/>
</dbReference>
<dbReference type="GO" id="GO:0045202">
    <property type="term" value="C:synapse"/>
    <property type="evidence" value="ECO:0007669"/>
    <property type="project" value="GOC"/>
</dbReference>
<dbReference type="GO" id="GO:0005085">
    <property type="term" value="F:guanyl-nucleotide exchange factor activity"/>
    <property type="evidence" value="ECO:0000318"/>
    <property type="project" value="GO_Central"/>
</dbReference>
<dbReference type="GO" id="GO:0006915">
    <property type="term" value="P:apoptotic process"/>
    <property type="evidence" value="ECO:0007669"/>
    <property type="project" value="UniProtKB-KW"/>
</dbReference>
<dbReference type="GO" id="GO:0007268">
    <property type="term" value="P:chemical synaptic transmission"/>
    <property type="evidence" value="ECO:0000315"/>
    <property type="project" value="WormBase"/>
</dbReference>
<dbReference type="GO" id="GO:0030421">
    <property type="term" value="P:defecation"/>
    <property type="evidence" value="ECO:0000315"/>
    <property type="project" value="WormBase"/>
</dbReference>
<dbReference type="GO" id="GO:0018991">
    <property type="term" value="P:egg-laying behavior"/>
    <property type="evidence" value="ECO:0000315"/>
    <property type="project" value="WormBase"/>
</dbReference>
<dbReference type="GO" id="GO:0010877">
    <property type="term" value="P:lipid transport involved in lipid storage"/>
    <property type="evidence" value="ECO:0000315"/>
    <property type="project" value="UniProtKB"/>
</dbReference>
<dbReference type="GO" id="GO:0007618">
    <property type="term" value="P:mating"/>
    <property type="evidence" value="ECO:0000315"/>
    <property type="project" value="WormBase"/>
</dbReference>
<dbReference type="GO" id="GO:0014057">
    <property type="term" value="P:positive regulation of acetylcholine secretion, neurotransmission"/>
    <property type="evidence" value="ECO:0000315"/>
    <property type="project" value="WormBase"/>
</dbReference>
<dbReference type="GO" id="GO:1905488">
    <property type="term" value="P:positive regulation of anterior/posterior axon guidance"/>
    <property type="evidence" value="ECO:0000315"/>
    <property type="project" value="UniProtKB"/>
</dbReference>
<dbReference type="GO" id="GO:2000294">
    <property type="term" value="P:positive regulation of defecation"/>
    <property type="evidence" value="ECO:0000315"/>
    <property type="project" value="UniProtKB"/>
</dbReference>
<dbReference type="GO" id="GO:1904731">
    <property type="term" value="P:positive regulation of intestinal lipid absorption"/>
    <property type="evidence" value="ECO:0000315"/>
    <property type="project" value="UniProtKB"/>
</dbReference>
<dbReference type="GO" id="GO:0042981">
    <property type="term" value="P:regulation of apoptotic process"/>
    <property type="evidence" value="ECO:0000318"/>
    <property type="project" value="GO_Central"/>
</dbReference>
<dbReference type="GO" id="GO:0032483">
    <property type="term" value="P:regulation of Rab protein signal transduction"/>
    <property type="evidence" value="ECO:0000318"/>
    <property type="project" value="GO_Central"/>
</dbReference>
<dbReference type="GO" id="GO:0007419">
    <property type="term" value="P:ventral cord development"/>
    <property type="evidence" value="ECO:0000315"/>
    <property type="project" value="UniProtKB"/>
</dbReference>
<dbReference type="FunFam" id="3.30.450.200:FF:000010">
    <property type="entry name" value="DENN/MADD domain-containing 3a"/>
    <property type="match status" value="1"/>
</dbReference>
<dbReference type="FunFam" id="3.40.50.11500:FF:000010">
    <property type="entry name" value="Protein CBR-AEX-3"/>
    <property type="match status" value="1"/>
</dbReference>
<dbReference type="Gene3D" id="3.30.450.200">
    <property type="match status" value="1"/>
</dbReference>
<dbReference type="Gene3D" id="3.40.50.11500">
    <property type="match status" value="1"/>
</dbReference>
<dbReference type="InterPro" id="IPR001194">
    <property type="entry name" value="cDENN_dom"/>
</dbReference>
<dbReference type="InterPro" id="IPR005112">
    <property type="entry name" value="dDENN_dom"/>
</dbReference>
<dbReference type="InterPro" id="IPR056574">
    <property type="entry name" value="Death_MADD"/>
</dbReference>
<dbReference type="InterPro" id="IPR043153">
    <property type="entry name" value="DENN_C"/>
</dbReference>
<dbReference type="InterPro" id="IPR039980">
    <property type="entry name" value="MADD"/>
</dbReference>
<dbReference type="InterPro" id="IPR037516">
    <property type="entry name" value="Tripartite_DENN"/>
</dbReference>
<dbReference type="InterPro" id="IPR005113">
    <property type="entry name" value="uDENN_dom"/>
</dbReference>
<dbReference type="PANTHER" id="PTHR13008:SF7">
    <property type="entry name" value="MAP KINASE-ACTIVATING DEATH DOMAIN PROTEIN"/>
    <property type="match status" value="1"/>
</dbReference>
<dbReference type="PANTHER" id="PTHR13008">
    <property type="entry name" value="MAP-KINASE ACTIVATING DEATH DOMAIN PROTEIN MADD /DENN/AEX-3 C.ELEGANS"/>
    <property type="match status" value="1"/>
</dbReference>
<dbReference type="Pfam" id="PF23629">
    <property type="entry name" value="Death_MADD"/>
    <property type="match status" value="1"/>
</dbReference>
<dbReference type="Pfam" id="PF02141">
    <property type="entry name" value="DENN"/>
    <property type="match status" value="1"/>
</dbReference>
<dbReference type="Pfam" id="PF25328">
    <property type="entry name" value="PH_MADD"/>
    <property type="match status" value="1"/>
</dbReference>
<dbReference type="Pfam" id="PF03456">
    <property type="entry name" value="uDENN"/>
    <property type="match status" value="1"/>
</dbReference>
<dbReference type="SMART" id="SM00801">
    <property type="entry name" value="dDENN"/>
    <property type="match status" value="1"/>
</dbReference>
<dbReference type="SMART" id="SM00799">
    <property type="entry name" value="DENN"/>
    <property type="match status" value="1"/>
</dbReference>
<dbReference type="SMART" id="SM00800">
    <property type="entry name" value="uDENN"/>
    <property type="match status" value="1"/>
</dbReference>
<dbReference type="PROSITE" id="PS50211">
    <property type="entry name" value="DENN"/>
    <property type="match status" value="1"/>
</dbReference>
<feature type="chain" id="PRO_0000064469" description="MAP kinase-activating death domain protein">
    <location>
        <begin position="1"/>
        <end position="1409"/>
    </location>
</feature>
<feature type="domain" description="uDENN" evidence="2">
    <location>
        <begin position="26"/>
        <end position="230"/>
    </location>
</feature>
<feature type="domain" description="cDENN" evidence="2">
    <location>
        <begin position="251"/>
        <end position="390"/>
    </location>
</feature>
<feature type="domain" description="dDENN" evidence="2">
    <location>
        <begin position="392"/>
        <end position="496"/>
    </location>
</feature>
<feature type="domain" description="Death">
    <location>
        <begin position="1109"/>
        <end position="1184"/>
    </location>
</feature>
<feature type="region of interest" description="Disordered" evidence="3">
    <location>
        <begin position="654"/>
        <end position="701"/>
    </location>
</feature>
<feature type="region of interest" description="Disordered" evidence="3">
    <location>
        <begin position="761"/>
        <end position="784"/>
    </location>
</feature>
<feature type="region of interest" description="Disordered" evidence="3">
    <location>
        <begin position="902"/>
        <end position="1008"/>
    </location>
</feature>
<feature type="region of interest" description="Disordered" evidence="3">
    <location>
        <begin position="1015"/>
        <end position="1034"/>
    </location>
</feature>
<feature type="compositionally biased region" description="Polar residues" evidence="3">
    <location>
        <begin position="680"/>
        <end position="691"/>
    </location>
</feature>
<feature type="compositionally biased region" description="Polar residues" evidence="3">
    <location>
        <begin position="761"/>
        <end position="772"/>
    </location>
</feature>
<feature type="compositionally biased region" description="Low complexity" evidence="3">
    <location>
        <begin position="773"/>
        <end position="784"/>
    </location>
</feature>
<feature type="compositionally biased region" description="Low complexity" evidence="3">
    <location>
        <begin position="902"/>
        <end position="913"/>
    </location>
</feature>
<feature type="compositionally biased region" description="Basic and acidic residues" evidence="3">
    <location>
        <begin position="915"/>
        <end position="925"/>
    </location>
</feature>
<feature type="compositionally biased region" description="Polar residues" evidence="3">
    <location>
        <begin position="941"/>
        <end position="961"/>
    </location>
</feature>
<feature type="compositionally biased region" description="Pro residues" evidence="3">
    <location>
        <begin position="963"/>
        <end position="1003"/>
    </location>
</feature>
<feature type="compositionally biased region" description="Low complexity" evidence="3">
    <location>
        <begin position="1020"/>
        <end position="1031"/>
    </location>
</feature>
<feature type="splice variant" id="VSP_015555" description="In isoform b." evidence="10">
    <original>DQICYAVLCVFSLAAAGHKKEEHSK</original>
    <variation>VDIAWAMHRVFSVQFAISCQKDTN</variation>
    <location>
        <begin position="1385"/>
        <end position="1409"/>
    </location>
</feature>
<evidence type="ECO:0000250" key="1">
    <source>
        <dbReference type="UniProtKB" id="Q8WXG6"/>
    </source>
</evidence>
<evidence type="ECO:0000255" key="2">
    <source>
        <dbReference type="PROSITE-ProRule" id="PRU00304"/>
    </source>
</evidence>
<evidence type="ECO:0000256" key="3">
    <source>
        <dbReference type="SAM" id="MobiDB-lite"/>
    </source>
</evidence>
<evidence type="ECO:0000269" key="4">
    <source>
    </source>
</evidence>
<evidence type="ECO:0000269" key="5">
    <source>
    </source>
</evidence>
<evidence type="ECO:0000269" key="6">
    <source>
    </source>
</evidence>
<evidence type="ECO:0000269" key="7">
    <source>
    </source>
</evidence>
<evidence type="ECO:0000269" key="8">
    <source>
    </source>
</evidence>
<evidence type="ECO:0000269" key="9">
    <source>
    </source>
</evidence>
<evidence type="ECO:0000305" key="10"/>
<proteinExistence type="evidence at protein level"/>
<comment type="function">
    <text evidence="1 4 5 6 7 8 9">Guanyl-nucleotide exchange factor that regulates small GTPases (By similarity). Converts GDP-bound inactive form of rab-3 and cab-1 to the GTP-bound active forms. Regulator of presynaptic activity that interacts with rab-3 to regulate synaptic vesicle release (PubMed:10970871, PubMed:9136770). Is also a regulator of the cab-1 synaptic transmission pathway (PubMed:10970871). Probably by converting rab-3 to its GTP-bound active form, plays a role in the recruitment of endophilin unc-57 to synaptic vesicles (PubMed:21029864). Probably by activating rab-3 and thus regulating the trafficking of dense-core vesicles, plays a role in AVG neuron-mediated formation of the right axon tract of the ventral nerve cord (PubMed:27116976). Regulates anterior body muscle contractions (aBOC) and the expulsion steps during the defecation motor program (DMP) (PubMed:18852466). Probably by regulating DMP, required for fatty acid uptake by intestinal cells (PubMed:25849533).</text>
</comment>
<comment type="subunit">
    <text evidence="4">Interacts with cab-1.</text>
</comment>
<comment type="subcellular location">
    <subcellularLocation>
        <location evidence="1">Cell membrane</location>
    </subcellularLocation>
    <subcellularLocation>
        <location evidence="1">Cytoplasm</location>
    </subcellularLocation>
</comment>
<comment type="alternative products">
    <event type="alternative splicing"/>
    <isoform>
        <id>O02626-1</id>
        <name>a</name>
        <sequence type="displayed"/>
    </isoform>
    <isoform>
        <id>O02626-2</id>
        <name>b</name>
        <sequence type="described" ref="VSP_015555"/>
    </isoform>
</comment>
<comment type="tissue specificity">
    <text evidence="9">Expressed in nearly all neurons.</text>
</comment>
<comment type="disruption phenotype">
    <text evidence="5 9">Worms exhibit pleiotropic behavioral defects that are suggestive of reduced synaptic transmission (PubMed:9136770). RNAi-mediated knockdown in the intestine causes a mild defect in the expulsion step of the defecation cycle (PubMed:18852466).</text>
</comment>
<comment type="similarity">
    <text evidence="10">Belongs to the MADD family.</text>
</comment>
<gene>
    <name type="primary">aex-3</name>
    <name type="ORF">C02H7.3</name>
</gene>
<accession>O02626</accession>
<accession>Q27467</accession>
<accession>Q8MQF4</accession>
<protein>
    <recommendedName>
        <fullName>MAP kinase-activating death domain protein</fullName>
    </recommendedName>
    <alternativeName>
        <fullName>Aboc, expulsion defective protein 3</fullName>
    </alternativeName>
    <alternativeName>
        <fullName>Regulator of presynaptic activity aex-3</fullName>
    </alternativeName>
</protein>
<name>MADD_CAEEL</name>
<organism>
    <name type="scientific">Caenorhabditis elegans</name>
    <dbReference type="NCBI Taxonomy" id="6239"/>
    <lineage>
        <taxon>Eukaryota</taxon>
        <taxon>Metazoa</taxon>
        <taxon>Ecdysozoa</taxon>
        <taxon>Nematoda</taxon>
        <taxon>Chromadorea</taxon>
        <taxon>Rhabditida</taxon>
        <taxon>Rhabditina</taxon>
        <taxon>Rhabditomorpha</taxon>
        <taxon>Rhabditoidea</taxon>
        <taxon>Rhabditidae</taxon>
        <taxon>Peloderinae</taxon>
        <taxon>Caenorhabditis</taxon>
    </lineage>
</organism>
<keyword id="KW-0025">Alternative splicing</keyword>
<keyword id="KW-0053">Apoptosis</keyword>
<keyword id="KW-1003">Cell membrane</keyword>
<keyword id="KW-0963">Cytoplasm</keyword>
<keyword id="KW-0344">Guanine-nucleotide releasing factor</keyword>
<keyword id="KW-0472">Membrane</keyword>
<keyword id="KW-1185">Reference proteome</keyword>